<organism>
    <name type="scientific">Cyprinus carpio</name>
    <name type="common">Common carp</name>
    <dbReference type="NCBI Taxonomy" id="7962"/>
    <lineage>
        <taxon>Eukaryota</taxon>
        <taxon>Metazoa</taxon>
        <taxon>Chordata</taxon>
        <taxon>Craniata</taxon>
        <taxon>Vertebrata</taxon>
        <taxon>Euteleostomi</taxon>
        <taxon>Actinopterygii</taxon>
        <taxon>Neopterygii</taxon>
        <taxon>Teleostei</taxon>
        <taxon>Ostariophysi</taxon>
        <taxon>Cypriniformes</taxon>
        <taxon>Cyprinidae</taxon>
        <taxon>Cyprininae</taxon>
        <taxon>Cyprinus</taxon>
    </lineage>
</organism>
<feature type="chain" id="PRO_0000123435" description="Myosin heavy chain, fast skeletal muscle">
    <location>
        <begin position="1"/>
        <end position="1935"/>
    </location>
</feature>
<feature type="domain" description="Myosin N-terminal SH3-like" evidence="4">
    <location>
        <begin position="32"/>
        <end position="81"/>
    </location>
</feature>
<feature type="domain" description="Myosin motor" evidence="3">
    <location>
        <begin position="85"/>
        <end position="779"/>
    </location>
</feature>
<feature type="domain" description="IQ" evidence="2">
    <location>
        <begin position="782"/>
        <end position="811"/>
    </location>
</feature>
<feature type="region of interest" description="Actin-binding">
    <location>
        <begin position="659"/>
        <end position="681"/>
    </location>
</feature>
<feature type="region of interest" description="Actin-binding">
    <location>
        <begin position="761"/>
        <end position="775"/>
    </location>
</feature>
<feature type="region of interest" description="Hinge">
    <location>
        <begin position="812"/>
        <end position="839"/>
    </location>
</feature>
<feature type="region of interest" description="Disordered" evidence="5">
    <location>
        <begin position="1589"/>
        <end position="1608"/>
    </location>
</feature>
<feature type="region of interest" description="Disordered" evidence="5">
    <location>
        <begin position="1902"/>
        <end position="1935"/>
    </location>
</feature>
<feature type="coiled-coil region" evidence="1">
    <location>
        <begin position="840"/>
        <end position="1935"/>
    </location>
</feature>
<feature type="compositionally biased region" description="Polar residues" evidence="5">
    <location>
        <begin position="1592"/>
        <end position="1603"/>
    </location>
</feature>
<feature type="compositionally biased region" description="Basic and acidic residues" evidence="5">
    <location>
        <begin position="1902"/>
        <end position="1913"/>
    </location>
</feature>
<feature type="compositionally biased region" description="Basic and acidic residues" evidence="5">
    <location>
        <begin position="1924"/>
        <end position="1935"/>
    </location>
</feature>
<feature type="binding site" evidence="1">
    <location>
        <begin position="178"/>
        <end position="185"/>
    </location>
    <ligand>
        <name>ATP</name>
        <dbReference type="ChEBI" id="CHEBI:30616"/>
    </ligand>
</feature>
<feature type="modified residue" description="N6,N6,N6-trimethyllysine" evidence="1">
    <location>
        <position position="129"/>
    </location>
</feature>
<keyword id="KW-0009">Actin-binding</keyword>
<keyword id="KW-0067">ATP-binding</keyword>
<keyword id="KW-0112">Calmodulin-binding</keyword>
<keyword id="KW-0175">Coiled coil</keyword>
<keyword id="KW-0963">Cytoplasm</keyword>
<keyword id="KW-0488">Methylation</keyword>
<keyword id="KW-0505">Motor protein</keyword>
<keyword id="KW-0514">Muscle protein</keyword>
<keyword id="KW-0518">Myosin</keyword>
<keyword id="KW-0547">Nucleotide-binding</keyword>
<keyword id="KW-1185">Reference proteome</keyword>
<keyword id="KW-0787">Thick filament</keyword>
<comment type="function">
    <text>Muscle contraction.</text>
</comment>
<comment type="subunit">
    <text>Muscle myosin is a hexameric protein that consists of 2 heavy chain subunits (MHC), 2 alkali light chain subunits (MLC) and 2 regulatory light chain subunits (MLC-2).</text>
</comment>
<comment type="subcellular location">
    <subcellularLocation>
        <location>Cytoplasm</location>
        <location>Myofibril</location>
    </subcellularLocation>
    <text>Thick filaments of the myofibrils.</text>
</comment>
<comment type="domain">
    <text>The rodlike tail sequence is highly repetitive, showing cycles of a 28-residue repeat pattern composed of 4 heptapeptides, characteristic for alpha-helical coiled coils.</text>
</comment>
<comment type="domain">
    <text evidence="6">Limited proteolysis of myosin heavy chain produces 1 light meromyosin (LMM) and 1 heavy meromyosin (HMM). HMM can be further cleaved into 2 globular subfragments (S1) and 1 rod-shaped subfragment (S2).</text>
</comment>
<comment type="similarity">
    <text evidence="6">Belongs to the TRAFAC class myosin-kinesin ATPase superfamily. Myosin family.</text>
</comment>
<name>MYSS_CYPCA</name>
<protein>
    <recommendedName>
        <fullName>Myosin heavy chain, fast skeletal muscle</fullName>
    </recommendedName>
</protein>
<sequence>MGDGEMECFGPAAVYLRKTERERIEAQNTPFDAKTAFFVVDPDEMYLKGTLVSKEGGKATVKTHSGKTVTVKEDEIFPMNPPKFDKIEDMAMMTHLNEPAVLFNLKERYAAWMIYTYSGLFCVTVNPYKWLPVYDAVVVGGYRGKKRIEAPPHIFSISDNAYQFMLTDRENQSVLITGESGAGKTVNTKRVIQYFATVGAMSGPKKPEPVPGKMQGSLEDQIVAANPLLEAYGNAKTVRNDNSSRFGKFIRIHFGTTGKLASADIETYLLEKSRVTFQLSAERSYHIFYQLMTGHKPELLEALLITTNPYDYPMISQGEITVKSINDVEEFIATDTAIDILGFTADEKISIYKLTGAVMHHGNMKFKQKQREEQAEPDGTEVADKIAYLMGLNSADMLKALCFPRVKVGNEMVTKGQTVPQVNNAVSALSKSVYEKMFLWMVIRINEMLDTKQPRQFFIGVLDIAGFEIFDFNSLEQLCINFTNEKLQQFFNHHMFVLEQEEYKKEGIEWEFIDFGMDLAACIELIEKPMGIFSILEEECMFPKATDTSFKNKLHDQHLGKTAAFQKPKPAKGKAEAHFSLVHYAGTVDYNIVGWLDKNKDPLNDSVVQLYQKSSLKVLAFLYATHGAEAEGGGGKKGKKKGGSFQTVSALFRENLGKLMTNLRSTHPHFVRCLIPNESKTPGLMENYLVIHQLRCNGVLEGIRICRKGFPSRILYGDFKQRYKVLNASVIPEGQFIDNKKASEKLLGSIDVDHTQYKFGHTKVFFKAGLLGALEEMRDEKLALLVTMTQALCRGYVMRKEFVKMMERRESIYSIQYNIRSFMNVKHWPWMKLYFKIKPLLKSAETEKEMAAMKENYEKMKEDLTKALAKKKELEEKMVSLLQEKNDLQLQVTAESENLSDAEERCEGLIKSKIQLEAKLKETNERLEDEEEINAELTAKKRKLEDECSELKKDIDDLELTLAKVEKEKHATENKVKNLTEEMASQDESIAKLTKEKKALQEAHQQTLDDLQAEEDKVNTLTKAKTKLEQQVDDLEGSLEQEKKLRMDLERAKRKLEGDLKLAQESIMDLENEKQQSDEKIKKKDFEISQLLSKIEDEQSLGAQLQKKIKELQARIEELEEEIEAERAARAKVEKQRADLSRELEEISERLEEAGGATAAQIEMNKKREAEFQKMRRDLEESTLQHEATAAALRKEQADSVAELGEQIDNLQRVKQKLEKEKSEYKMEIDDLTSNMEAVAKAKANLEKMCRTLEDQLSEIKTKSDENVRQLNDMNAQRARLQTENGEFSRQLEEKEALVSQLTRGKQAYTQQIEELKRHIEEEVKAKNALAHAVQSARHDCDLLREQYEEEQEAKAELQRGMSKANSEVAQWRTKYETDAIQRTEELEEAKKKLAQRLQDAEESIEAVNSKCASLEKTKQRLQGEVEDLMIDVERANSLAANLDKKQRNFDKVLAEWKQKYEESQAELEGAQKEARSLSTELFKMKNSYEEALDHLETLKRENKNLQQEISDLTEQLGETGKSIHELEKAKKTVESEKSEIQTALEEAEGTLEHEESKILRVQLELNQVKSEIDRKLAEKDEEMEQIKRNSQRVIDSMQSTLDSEVRSRNDALRVKKKMEGDLNEMEIQLSHANRQAAEAQKQLRNVQGQLKDAQLHLDEAVRGQEDMKEQVAMVERRNSLMQAEIEELRAALEQTERGRKVAEQELVDASERVGLLHSQNTSLINTKKKLEADLVQVQGEVDDAVQEARNAEEKAKKAITDAAMMAEELKKEQDTSAHLERMKKNLEVTVKDLQHRLDEAESLAMKGGKKQLQKLESRVRELEAEVEAEQRRGADAVKGVRKYERRVKELTYQTEEDKKNVIRLQDLVDKLQLKVKVYKRQAEEAEEQTNTHLSRYRKVQHELEEAQERADVAESQVNKLRAKSRDAGKSKDEE</sequence>
<proteinExistence type="evidence at transcript level"/>
<accession>Q90339</accession>
<dbReference type="EMBL" id="D89992">
    <property type="protein sequence ID" value="BAA22069.1"/>
    <property type="molecule type" value="mRNA"/>
</dbReference>
<dbReference type="EMBL" id="D50476">
    <property type="protein sequence ID" value="BAA09069.1"/>
    <property type="molecule type" value="mRNA"/>
</dbReference>
<dbReference type="EMBL" id="D43700">
    <property type="protein sequence ID" value="BAA07802.1"/>
    <property type="molecule type" value="mRNA"/>
</dbReference>
<dbReference type="PIR" id="I50496">
    <property type="entry name" value="I50496"/>
</dbReference>
<dbReference type="PIR" id="S66521">
    <property type="entry name" value="S66521"/>
</dbReference>
<dbReference type="SMR" id="Q90339"/>
<dbReference type="Proteomes" id="UP000694384">
    <property type="component" value="Unplaced"/>
</dbReference>
<dbReference type="Proteomes" id="UP000694427">
    <property type="component" value="Unplaced"/>
</dbReference>
<dbReference type="Proteomes" id="UP000694700">
    <property type="component" value="Unplaced"/>
</dbReference>
<dbReference type="Proteomes" id="UP000694701">
    <property type="component" value="Unplaced"/>
</dbReference>
<dbReference type="Proteomes" id="UP001155660">
    <property type="component" value="Unplaced"/>
</dbReference>
<dbReference type="GO" id="GO:0030016">
    <property type="term" value="C:myofibril"/>
    <property type="evidence" value="ECO:0007669"/>
    <property type="project" value="UniProtKB-SubCell"/>
</dbReference>
<dbReference type="GO" id="GO:0032982">
    <property type="term" value="C:myosin filament"/>
    <property type="evidence" value="ECO:0007669"/>
    <property type="project" value="UniProtKB-KW"/>
</dbReference>
<dbReference type="GO" id="GO:0016460">
    <property type="term" value="C:myosin II complex"/>
    <property type="evidence" value="ECO:0007669"/>
    <property type="project" value="TreeGrafter"/>
</dbReference>
<dbReference type="GO" id="GO:0051015">
    <property type="term" value="F:actin filament binding"/>
    <property type="evidence" value="ECO:0007669"/>
    <property type="project" value="InterPro"/>
</dbReference>
<dbReference type="GO" id="GO:0005524">
    <property type="term" value="F:ATP binding"/>
    <property type="evidence" value="ECO:0007669"/>
    <property type="project" value="UniProtKB-KW"/>
</dbReference>
<dbReference type="GO" id="GO:0005516">
    <property type="term" value="F:calmodulin binding"/>
    <property type="evidence" value="ECO:0007669"/>
    <property type="project" value="UniProtKB-KW"/>
</dbReference>
<dbReference type="GO" id="GO:0000146">
    <property type="term" value="F:microfilament motor activity"/>
    <property type="evidence" value="ECO:0007669"/>
    <property type="project" value="TreeGrafter"/>
</dbReference>
<dbReference type="GO" id="GO:0048731">
    <property type="term" value="P:system development"/>
    <property type="evidence" value="ECO:0007669"/>
    <property type="project" value="UniProtKB-ARBA"/>
</dbReference>
<dbReference type="CDD" id="cd01377">
    <property type="entry name" value="MYSc_class_II"/>
    <property type="match status" value="1"/>
</dbReference>
<dbReference type="FunFam" id="1.10.10.820:FF:000001">
    <property type="entry name" value="Myosin heavy chain"/>
    <property type="match status" value="1"/>
</dbReference>
<dbReference type="FunFam" id="1.20.5.340:FF:000002">
    <property type="entry name" value="Myosin heavy chain"/>
    <property type="match status" value="1"/>
</dbReference>
<dbReference type="FunFam" id="1.20.5.340:FF:000003">
    <property type="entry name" value="Myosin heavy chain"/>
    <property type="match status" value="1"/>
</dbReference>
<dbReference type="FunFam" id="1.20.5.340:FF:000004">
    <property type="entry name" value="Myosin heavy chain"/>
    <property type="match status" value="1"/>
</dbReference>
<dbReference type="FunFam" id="1.20.5.340:FF:000006">
    <property type="entry name" value="Myosin heavy chain"/>
    <property type="match status" value="1"/>
</dbReference>
<dbReference type="FunFam" id="1.20.5.340:FF:000013">
    <property type="entry name" value="Myosin heavy chain"/>
    <property type="match status" value="1"/>
</dbReference>
<dbReference type="FunFam" id="1.20.5.370:FF:000001">
    <property type="entry name" value="Myosin heavy chain"/>
    <property type="match status" value="1"/>
</dbReference>
<dbReference type="FunFam" id="1.20.5.370:FF:000002">
    <property type="entry name" value="Myosin heavy chain"/>
    <property type="match status" value="1"/>
</dbReference>
<dbReference type="FunFam" id="1.20.5.370:FF:000003">
    <property type="entry name" value="Myosin heavy chain"/>
    <property type="match status" value="1"/>
</dbReference>
<dbReference type="FunFam" id="1.20.5.370:FF:000007">
    <property type="entry name" value="Myosin heavy chain"/>
    <property type="match status" value="1"/>
</dbReference>
<dbReference type="FunFam" id="1.20.5.370:FF:000008">
    <property type="entry name" value="Myosin heavy chain"/>
    <property type="match status" value="1"/>
</dbReference>
<dbReference type="FunFam" id="1.20.5.4820:FF:000001">
    <property type="entry name" value="Myosin heavy chain"/>
    <property type="match status" value="1"/>
</dbReference>
<dbReference type="FunFam" id="1.20.58.530:FF:000001">
    <property type="entry name" value="Myosin heavy chain"/>
    <property type="match status" value="1"/>
</dbReference>
<dbReference type="FunFam" id="2.30.30.360:FF:000001">
    <property type="entry name" value="Myosin heavy chain"/>
    <property type="match status" value="1"/>
</dbReference>
<dbReference type="FunFam" id="3.40.850.10:FF:000024">
    <property type="entry name" value="Myosin heavy chain, isoform J"/>
    <property type="match status" value="1"/>
</dbReference>
<dbReference type="FunFam" id="1.20.120.720:FF:000001">
    <property type="entry name" value="Myosin heavy chain, muscle"/>
    <property type="match status" value="1"/>
</dbReference>
<dbReference type="Gene3D" id="1.10.10.820">
    <property type="match status" value="1"/>
</dbReference>
<dbReference type="Gene3D" id="1.20.5.340">
    <property type="match status" value="5"/>
</dbReference>
<dbReference type="Gene3D" id="1.20.5.370">
    <property type="match status" value="4"/>
</dbReference>
<dbReference type="Gene3D" id="1.20.5.4820">
    <property type="match status" value="1"/>
</dbReference>
<dbReference type="Gene3D" id="1.20.58.530">
    <property type="match status" value="1"/>
</dbReference>
<dbReference type="Gene3D" id="6.10.250.2420">
    <property type="match status" value="1"/>
</dbReference>
<dbReference type="Gene3D" id="3.40.850.10">
    <property type="entry name" value="Kinesin motor domain"/>
    <property type="match status" value="1"/>
</dbReference>
<dbReference type="Gene3D" id="2.30.30.360">
    <property type="entry name" value="Myosin S1 fragment, N-terminal"/>
    <property type="match status" value="1"/>
</dbReference>
<dbReference type="Gene3D" id="1.20.120.720">
    <property type="entry name" value="Myosin VI head, motor domain, U50 subdomain"/>
    <property type="match status" value="1"/>
</dbReference>
<dbReference type="InterPro" id="IPR036961">
    <property type="entry name" value="Kinesin_motor_dom_sf"/>
</dbReference>
<dbReference type="InterPro" id="IPR001609">
    <property type="entry name" value="Myosin_head_motor_dom-like"/>
</dbReference>
<dbReference type="InterPro" id="IPR004009">
    <property type="entry name" value="Myosin_N"/>
</dbReference>
<dbReference type="InterPro" id="IPR008989">
    <property type="entry name" value="Myosin_S1_N"/>
</dbReference>
<dbReference type="InterPro" id="IPR002928">
    <property type="entry name" value="Myosin_tail"/>
</dbReference>
<dbReference type="InterPro" id="IPR027417">
    <property type="entry name" value="P-loop_NTPase"/>
</dbReference>
<dbReference type="InterPro" id="IPR014751">
    <property type="entry name" value="XRCC4-like_C"/>
</dbReference>
<dbReference type="PANTHER" id="PTHR45615:SF44">
    <property type="entry name" value="MYOSIN HEAVY CHAIN 4-RELATED"/>
    <property type="match status" value="1"/>
</dbReference>
<dbReference type="PANTHER" id="PTHR45615">
    <property type="entry name" value="MYOSIN HEAVY CHAIN, NON-MUSCLE"/>
    <property type="match status" value="1"/>
</dbReference>
<dbReference type="Pfam" id="PF00063">
    <property type="entry name" value="Myosin_head"/>
    <property type="match status" value="1"/>
</dbReference>
<dbReference type="Pfam" id="PF02736">
    <property type="entry name" value="Myosin_N"/>
    <property type="match status" value="1"/>
</dbReference>
<dbReference type="Pfam" id="PF01576">
    <property type="entry name" value="Myosin_tail_1"/>
    <property type="match status" value="1"/>
</dbReference>
<dbReference type="PRINTS" id="PR00193">
    <property type="entry name" value="MYOSINHEAVY"/>
</dbReference>
<dbReference type="SMART" id="SM00242">
    <property type="entry name" value="MYSc"/>
    <property type="match status" value="1"/>
</dbReference>
<dbReference type="SUPFAM" id="SSF90257">
    <property type="entry name" value="Myosin rod fragments"/>
    <property type="match status" value="4"/>
</dbReference>
<dbReference type="SUPFAM" id="SSF52540">
    <property type="entry name" value="P-loop containing nucleoside triphosphate hydrolases"/>
    <property type="match status" value="1"/>
</dbReference>
<dbReference type="SUPFAM" id="SSF57997">
    <property type="entry name" value="Tropomyosin"/>
    <property type="match status" value="1"/>
</dbReference>
<dbReference type="PROSITE" id="PS50096">
    <property type="entry name" value="IQ"/>
    <property type="match status" value="1"/>
</dbReference>
<dbReference type="PROSITE" id="PS51456">
    <property type="entry name" value="MYOSIN_MOTOR"/>
    <property type="match status" value="1"/>
</dbReference>
<dbReference type="PROSITE" id="PS51844">
    <property type="entry name" value="SH3_LIKE"/>
    <property type="match status" value="1"/>
</dbReference>
<evidence type="ECO:0000255" key="1"/>
<evidence type="ECO:0000255" key="2">
    <source>
        <dbReference type="PROSITE-ProRule" id="PRU00116"/>
    </source>
</evidence>
<evidence type="ECO:0000255" key="3">
    <source>
        <dbReference type="PROSITE-ProRule" id="PRU00782"/>
    </source>
</evidence>
<evidence type="ECO:0000255" key="4">
    <source>
        <dbReference type="PROSITE-ProRule" id="PRU01190"/>
    </source>
</evidence>
<evidence type="ECO:0000256" key="5">
    <source>
        <dbReference type="SAM" id="MobiDB-lite"/>
    </source>
</evidence>
<evidence type="ECO:0000305" key="6"/>
<reference key="1">
    <citation type="journal article" date="1997" name="Eur. J. Biochem.">
        <title>Structural differences in the crossbridge head of temperature-associated myosin subfragment-1 isoforms from carp fast skeletal muscle.</title>
        <authorList>
            <person name="Hirayama Y."/>
            <person name="Watabe S."/>
        </authorList>
    </citation>
    <scope>NUCLEOTIDE SEQUENCE [MRNA]</scope>
    <source>
        <tissue>Fast-twitch skeletal muscle</tissue>
    </source>
</reference>
<reference key="2">
    <citation type="journal article" date="1997" name="J. Exp. Biol.">
        <title>cDNA cloning of myosin heavy chain isoforms from carp fast skeletal muscle and their gene expression associated with temperature acclimation.</title>
        <authorList>
            <person name="Imai J."/>
            <person name="Hirayama Y."/>
            <person name="Kikuchi K."/>
            <person name="Kakinuma M."/>
            <person name="Watabe S."/>
        </authorList>
    </citation>
    <scope>NUCLEOTIDE SEQUENCE [MRNA] OF 981-1935</scope>
    <source>
        <tissue>Fast-twitch skeletal muscle</tissue>
    </source>
</reference>
<reference key="3">
    <citation type="journal article" date="1995" name="Biochem. Biophys. Res. Commun.">
        <title>Temperature acclimation induces light meromyosin isoforms with different primary structures in carp fast skeletal muscle.</title>
        <authorList>
            <person name="Watabe S."/>
            <person name="Imai J."/>
            <person name="Nakaya M."/>
            <person name="Hirayama Y."/>
            <person name="Okamoto Y."/>
            <person name="Masaki H."/>
            <person name="Uozumi T."/>
            <person name="Hirono I."/>
            <person name="Aoki T."/>
        </authorList>
    </citation>
    <scope>NUCLEOTIDE SEQUENCE [MRNA] OF 1387-1528</scope>
</reference>